<sequence length="314" mass="35709">MALAARLWRFLPFRRGAAPGSLLSAGTSGSRGHCGPCRLRGFEVMGNPGTFKRGLLLSALSYLGFETYQVISQAAVVHATAKVEEILEQADYLCESGETEKLYQLLTQYKESEDAELLWRLARASRDVAQLSRTSEEEKKLLVYEALEYAKRALEKNESSFAAHKWYAICLSDVGDYEGIKAKIANAYIIKEHFEKAIELNPKDATSIHLMGIWCYTFAEMPWYQRRIAKMLFATPPSSTYEKALSYFHRAEQVDPNFYSKNLLLLGKTYLKLHNKKLAAFWLMKAKDYPAHTEEDKQIQTEAAQLLTSFSEKN</sequence>
<reference key="1">
    <citation type="submission" date="2004-11" db="EMBL/GenBank/DDBJ databases">
        <authorList>
            <consortium name="The German cDNA consortium"/>
        </authorList>
    </citation>
    <scope>NUCLEOTIDE SEQUENCE [LARGE SCALE MRNA]</scope>
    <source>
        <tissue>Heart</tissue>
    </source>
</reference>
<evidence type="ECO:0000250" key="1"/>
<evidence type="ECO:0000250" key="2">
    <source>
        <dbReference type="UniProtKB" id="Q9DCV4"/>
    </source>
</evidence>
<evidence type="ECO:0000305" key="3"/>
<proteinExistence type="evidence at transcript level"/>
<protein>
    <recommendedName>
        <fullName>Regulator of microtubule dynamics protein 1</fullName>
        <shortName>RMD-1</shortName>
    </recommendedName>
    <alternativeName>
        <fullName>Protein FAM82B</fullName>
    </alternativeName>
</protein>
<accession>Q5R8E4</accession>
<dbReference type="EMBL" id="CR859808">
    <property type="protein sequence ID" value="CAH91966.1"/>
    <property type="molecule type" value="mRNA"/>
</dbReference>
<dbReference type="RefSeq" id="NP_001126139.1">
    <property type="nucleotide sequence ID" value="NM_001132667.1"/>
</dbReference>
<dbReference type="SMR" id="Q5R8E4"/>
<dbReference type="FunCoup" id="Q5R8E4">
    <property type="interactions" value="1479"/>
</dbReference>
<dbReference type="STRING" id="9601.ENSPPYP00000021003"/>
<dbReference type="GeneID" id="100173097"/>
<dbReference type="KEGG" id="pon:100173097"/>
<dbReference type="CTD" id="51115"/>
<dbReference type="eggNOG" id="ENOG502QSJV">
    <property type="taxonomic scope" value="Eukaryota"/>
</dbReference>
<dbReference type="InParanoid" id="Q5R8E4"/>
<dbReference type="OrthoDB" id="69711at2759"/>
<dbReference type="Proteomes" id="UP000001595">
    <property type="component" value="Unplaced"/>
</dbReference>
<dbReference type="GO" id="GO:0005739">
    <property type="term" value="C:mitochondrion"/>
    <property type="evidence" value="ECO:0007669"/>
    <property type="project" value="TreeGrafter"/>
</dbReference>
<dbReference type="GO" id="GO:0097431">
    <property type="term" value="C:mitotic spindle pole"/>
    <property type="evidence" value="ECO:0007669"/>
    <property type="project" value="TreeGrafter"/>
</dbReference>
<dbReference type="GO" id="GO:0005876">
    <property type="term" value="C:spindle microtubule"/>
    <property type="evidence" value="ECO:0007669"/>
    <property type="project" value="TreeGrafter"/>
</dbReference>
<dbReference type="GO" id="GO:0008017">
    <property type="term" value="F:microtubule binding"/>
    <property type="evidence" value="ECO:0007669"/>
    <property type="project" value="TreeGrafter"/>
</dbReference>
<dbReference type="FunFam" id="1.25.40.10:FF:002154">
    <property type="entry name" value="regulator of microtubule dynamics protein 1"/>
    <property type="match status" value="1"/>
</dbReference>
<dbReference type="Gene3D" id="1.25.40.10">
    <property type="entry name" value="Tetratricopeptide repeat domain"/>
    <property type="match status" value="1"/>
</dbReference>
<dbReference type="InterPro" id="IPR049039">
    <property type="entry name" value="RMD1-3_a_helical_rpt"/>
</dbReference>
<dbReference type="InterPro" id="IPR011990">
    <property type="entry name" value="TPR-like_helical_dom_sf"/>
</dbReference>
<dbReference type="PANTHER" id="PTHR16056">
    <property type="entry name" value="REGULATOR OF MICROTUBULE DYNAMICS PROTEIN"/>
    <property type="match status" value="1"/>
</dbReference>
<dbReference type="PANTHER" id="PTHR16056:SF16">
    <property type="entry name" value="REGULATOR OF MICROTUBULE DYNAMICS PROTEIN 1"/>
    <property type="match status" value="1"/>
</dbReference>
<dbReference type="Pfam" id="PF21033">
    <property type="entry name" value="RMD1-3"/>
    <property type="match status" value="1"/>
</dbReference>
<dbReference type="SUPFAM" id="SSF48452">
    <property type="entry name" value="TPR-like"/>
    <property type="match status" value="1"/>
</dbReference>
<keyword id="KW-0963">Cytoplasm</keyword>
<keyword id="KW-0206">Cytoskeleton</keyword>
<keyword id="KW-0493">Microtubule</keyword>
<keyword id="KW-1185">Reference proteome</keyword>
<keyword id="KW-0677">Repeat</keyword>
<keyword id="KW-0802">TPR repeat</keyword>
<name>RMD1_PONAB</name>
<feature type="chain" id="PRO_0000187182" description="Regulator of microtubule dynamics protein 1">
    <location>
        <begin position="1"/>
        <end position="314"/>
    </location>
</feature>
<feature type="repeat" description="TPR 1">
    <location>
        <begin position="168"/>
        <end position="204"/>
    </location>
</feature>
<feature type="repeat" description="TPR 2">
    <location>
        <begin position="222"/>
        <end position="258"/>
    </location>
</feature>
<feature type="modified residue" description="N6-succinyllysine" evidence="2">
    <location>
        <position position="165"/>
    </location>
</feature>
<gene>
    <name type="primary">RMDN1</name>
    <name type="synonym">FAM82B</name>
</gene>
<comment type="subunit">
    <text evidence="1">Interacts with microtubules.</text>
</comment>
<comment type="subcellular location">
    <subcellularLocation>
        <location evidence="1">Cytoplasm</location>
    </subcellularLocation>
    <subcellularLocation>
        <location evidence="1">Cytoplasm</location>
        <location evidence="1">Cytoskeleton</location>
        <location evidence="1">Spindle</location>
    </subcellularLocation>
    <subcellularLocation>
        <location evidence="1">Cytoplasm</location>
        <location evidence="1">Cytoskeleton</location>
        <location evidence="1">Spindle pole</location>
    </subcellularLocation>
    <text evidence="1">In interphase localizes in the cytoplasm, and during mitosis localizes to the spindle microtubules and spindle poles.</text>
</comment>
<comment type="similarity">
    <text evidence="3">Belongs to the RMDN family.</text>
</comment>
<organism>
    <name type="scientific">Pongo abelii</name>
    <name type="common">Sumatran orangutan</name>
    <name type="synonym">Pongo pygmaeus abelii</name>
    <dbReference type="NCBI Taxonomy" id="9601"/>
    <lineage>
        <taxon>Eukaryota</taxon>
        <taxon>Metazoa</taxon>
        <taxon>Chordata</taxon>
        <taxon>Craniata</taxon>
        <taxon>Vertebrata</taxon>
        <taxon>Euteleostomi</taxon>
        <taxon>Mammalia</taxon>
        <taxon>Eutheria</taxon>
        <taxon>Euarchontoglires</taxon>
        <taxon>Primates</taxon>
        <taxon>Haplorrhini</taxon>
        <taxon>Catarrhini</taxon>
        <taxon>Hominidae</taxon>
        <taxon>Pongo</taxon>
    </lineage>
</organism>